<dbReference type="EC" id="3.2.2.19" evidence="1"/>
<dbReference type="EMBL" id="BC109957">
    <property type="protein sequence ID" value="AAI09958.1"/>
    <property type="molecule type" value="mRNA"/>
</dbReference>
<dbReference type="RefSeq" id="NP_001033643.1">
    <property type="nucleotide sequence ID" value="NM_001038554.2"/>
</dbReference>
<dbReference type="RefSeq" id="XP_024845479.1">
    <property type="nucleotide sequence ID" value="XM_024989711.2"/>
</dbReference>
<dbReference type="SMR" id="Q32KR8"/>
<dbReference type="FunCoup" id="Q32KR8">
    <property type="interactions" value="1124"/>
</dbReference>
<dbReference type="PaxDb" id="9913-ENSBTAP00000049744"/>
<dbReference type="GeneID" id="525738"/>
<dbReference type="KEGG" id="bta:525738"/>
<dbReference type="CTD" id="141"/>
<dbReference type="VEuPathDB" id="HostDB:ENSBTAG00000009391"/>
<dbReference type="eggNOG" id="ENOG502QPMI">
    <property type="taxonomic scope" value="Eukaryota"/>
</dbReference>
<dbReference type="HOGENOM" id="CLU_047061_0_0_1"/>
<dbReference type="InParanoid" id="Q32KR8"/>
<dbReference type="OrthoDB" id="10250509at2759"/>
<dbReference type="TreeFam" id="TF329417"/>
<dbReference type="Proteomes" id="UP000009136">
    <property type="component" value="Chromosome 1"/>
</dbReference>
<dbReference type="Bgee" id="ENSBTAG00000009391">
    <property type="expression patterns" value="Expressed in liver and 108 other cell types or tissues"/>
</dbReference>
<dbReference type="GO" id="GO:0003875">
    <property type="term" value="F:ADP-ribosylarginine hydrolase activity"/>
    <property type="evidence" value="ECO:0000250"/>
    <property type="project" value="UniProtKB"/>
</dbReference>
<dbReference type="GO" id="GO:0000287">
    <property type="term" value="F:magnesium ion binding"/>
    <property type="evidence" value="ECO:0000250"/>
    <property type="project" value="UniProtKB"/>
</dbReference>
<dbReference type="GO" id="GO:0030955">
    <property type="term" value="F:potassium ion binding"/>
    <property type="evidence" value="ECO:0000250"/>
    <property type="project" value="UniProtKB"/>
</dbReference>
<dbReference type="GO" id="GO:0051725">
    <property type="term" value="P:protein de-ADP-ribosylation"/>
    <property type="evidence" value="ECO:0000250"/>
    <property type="project" value="UniProtKB"/>
</dbReference>
<dbReference type="GO" id="GO:0036211">
    <property type="term" value="P:protein modification process"/>
    <property type="evidence" value="ECO:0000250"/>
    <property type="project" value="UniProtKB"/>
</dbReference>
<dbReference type="FunFam" id="1.10.4080.10:FF:000002">
    <property type="entry name" value="ADP-ribosylarginine hydrolase isoform X1"/>
    <property type="match status" value="1"/>
</dbReference>
<dbReference type="Gene3D" id="1.10.4080.10">
    <property type="entry name" value="ADP-ribosylation/Crystallin J1"/>
    <property type="match status" value="1"/>
</dbReference>
<dbReference type="InterPro" id="IPR012108">
    <property type="entry name" value="ADP-ribosylarg_hydro"/>
</dbReference>
<dbReference type="InterPro" id="IPR050792">
    <property type="entry name" value="ADP-ribosylglycohydrolase"/>
</dbReference>
<dbReference type="InterPro" id="IPR005502">
    <property type="entry name" value="Ribosyl_crysJ1"/>
</dbReference>
<dbReference type="InterPro" id="IPR036705">
    <property type="entry name" value="Ribosyl_crysJ1_sf"/>
</dbReference>
<dbReference type="PANTHER" id="PTHR16222">
    <property type="entry name" value="ADP-RIBOSYLGLYCOHYDROLASE"/>
    <property type="match status" value="1"/>
</dbReference>
<dbReference type="PANTHER" id="PTHR16222:SF26">
    <property type="entry name" value="ADP-RIBOSYLHYDROLASE ARH1"/>
    <property type="match status" value="1"/>
</dbReference>
<dbReference type="Pfam" id="PF03747">
    <property type="entry name" value="ADP_ribosyl_GH"/>
    <property type="match status" value="1"/>
</dbReference>
<dbReference type="PIRSF" id="PIRSF016939">
    <property type="entry name" value="ADP_ribslarg_hdr"/>
    <property type="match status" value="1"/>
</dbReference>
<dbReference type="SUPFAM" id="SSF101478">
    <property type="entry name" value="ADP-ribosylglycohydrolase"/>
    <property type="match status" value="1"/>
</dbReference>
<organism>
    <name type="scientific">Bos taurus</name>
    <name type="common">Bovine</name>
    <dbReference type="NCBI Taxonomy" id="9913"/>
    <lineage>
        <taxon>Eukaryota</taxon>
        <taxon>Metazoa</taxon>
        <taxon>Chordata</taxon>
        <taxon>Craniata</taxon>
        <taxon>Vertebrata</taxon>
        <taxon>Euteleostomi</taxon>
        <taxon>Mammalia</taxon>
        <taxon>Eutheria</taxon>
        <taxon>Laurasiatheria</taxon>
        <taxon>Artiodactyla</taxon>
        <taxon>Ruminantia</taxon>
        <taxon>Pecora</taxon>
        <taxon>Bovidae</taxon>
        <taxon>Bovinae</taxon>
        <taxon>Bos</taxon>
    </lineage>
</organism>
<name>ADPRH_BOVIN</name>
<evidence type="ECO:0000250" key="1">
    <source>
        <dbReference type="UniProtKB" id="P54922"/>
    </source>
</evidence>
<evidence type="ECO:0000305" key="2"/>
<gene>
    <name type="primary">ADPRH</name>
    <name type="synonym">ARH1</name>
</gene>
<keyword id="KW-0378">Hydrolase</keyword>
<keyword id="KW-0460">Magnesium</keyword>
<keyword id="KW-0479">Metal-binding</keyword>
<keyword id="KW-1185">Reference proteome</keyword>
<feature type="chain" id="PRO_0000247292" description="ADP-ribosylhydrolase ARH1">
    <location>
        <begin position="1"/>
        <end position="353"/>
    </location>
</feature>
<feature type="region of interest" description="Substrate" evidence="1">
    <location>
        <begin position="106"/>
        <end position="108"/>
    </location>
</feature>
<feature type="region of interest" description="Substrate" evidence="1">
    <location>
        <begin position="168"/>
        <end position="170"/>
    </location>
</feature>
<feature type="region of interest" description="Substrate" evidence="1">
    <location>
        <begin position="268"/>
        <end position="270"/>
    </location>
</feature>
<feature type="region of interest" description="Substrate" evidence="1">
    <location>
        <begin position="274"/>
        <end position="275"/>
    </location>
</feature>
<feature type="binding site" evidence="1">
    <location>
        <position position="59"/>
    </location>
    <ligand>
        <name>Mg(2+)</name>
        <dbReference type="ChEBI" id="CHEBI:18420"/>
        <label>1</label>
    </ligand>
</feature>
<feature type="binding site" evidence="1">
    <location>
        <position position="60"/>
    </location>
    <ligand>
        <name>Mg(2+)</name>
        <dbReference type="ChEBI" id="CHEBI:18420"/>
        <label>1</label>
    </ligand>
</feature>
<feature type="binding site" evidence="1">
    <location>
        <position position="61"/>
    </location>
    <ligand>
        <name>Mg(2+)</name>
        <dbReference type="ChEBI" id="CHEBI:18420"/>
        <label>1</label>
    </ligand>
</feature>
<feature type="binding site" evidence="1">
    <location>
        <position position="90"/>
    </location>
    <ligand>
        <name>substrate</name>
    </ligand>
</feature>
<feature type="binding site" evidence="1">
    <location>
        <position position="129"/>
    </location>
    <ligand>
        <name>substrate</name>
    </ligand>
</feature>
<feature type="binding site" evidence="1">
    <location>
        <position position="135"/>
    </location>
    <ligand>
        <name>substrate</name>
    </ligand>
</feature>
<feature type="binding site" evidence="1">
    <location>
        <position position="307"/>
    </location>
    <ligand>
        <name>Mg(2+)</name>
        <dbReference type="ChEBI" id="CHEBI:18420"/>
        <label>2</label>
    </ligand>
</feature>
<feature type="binding site" evidence="1">
    <location>
        <position position="309"/>
    </location>
    <ligand>
        <name>Mg(2+)</name>
        <dbReference type="ChEBI" id="CHEBI:18420"/>
        <label>1</label>
    </ligand>
</feature>
<feature type="binding site" evidence="1">
    <location>
        <position position="309"/>
    </location>
    <ligand>
        <name>Mg(2+)</name>
        <dbReference type="ChEBI" id="CHEBI:18420"/>
        <label>2</label>
    </ligand>
</feature>
<feature type="binding site" evidence="1">
    <location>
        <position position="310"/>
    </location>
    <ligand>
        <name>Mg(2+)</name>
        <dbReference type="ChEBI" id="CHEBI:18420"/>
        <label>2</label>
    </ligand>
</feature>
<proteinExistence type="evidence at transcript level"/>
<reference key="1">
    <citation type="submission" date="2005-11" db="EMBL/GenBank/DDBJ databases">
        <authorList>
            <consortium name="NIH - Mammalian Gene Collection (MGC) project"/>
        </authorList>
    </citation>
    <scope>NUCLEOTIDE SEQUENCE [LARGE SCALE MRNA]</scope>
    <source>
        <strain>Crossbred X Angus</strain>
        <tissue>Liver</tissue>
    </source>
</reference>
<protein>
    <recommendedName>
        <fullName evidence="2">ADP-ribosylhydrolase ARH1</fullName>
        <ecNumber evidence="1">3.2.2.19</ecNumber>
    </recommendedName>
    <alternativeName>
        <fullName>ADP-ribose-L-arginine cleaving enzyme</fullName>
    </alternativeName>
    <alternativeName>
        <fullName>[Protein ADP-ribosylarginine] hydrolase</fullName>
        <shortName>ADP-ribosylarginine hydrolase</shortName>
    </alternativeName>
</protein>
<accession>Q32KR8</accession>
<comment type="function">
    <text evidence="1">Specifically acts as an arginine mono-ADP-ribosylhydrolase by mediating the removal of mono-ADP-ribose attached to arginine residues on proteins.</text>
</comment>
<comment type="catalytic activity">
    <reaction evidence="1">
        <text>N(omega)-(ADP-D-ribosyl)-L-arginyl-[protein] + H2O = ADP-D-ribose + L-arginyl-[protein]</text>
        <dbReference type="Rhea" id="RHEA:14885"/>
        <dbReference type="Rhea" id="RHEA-COMP:10532"/>
        <dbReference type="Rhea" id="RHEA-COMP:15087"/>
        <dbReference type="ChEBI" id="CHEBI:15377"/>
        <dbReference type="ChEBI" id="CHEBI:29965"/>
        <dbReference type="ChEBI" id="CHEBI:57967"/>
        <dbReference type="ChEBI" id="CHEBI:142554"/>
        <dbReference type="EC" id="3.2.2.19"/>
    </reaction>
</comment>
<comment type="catalytic activity">
    <reaction evidence="1">
        <text>alpha-NAD(+) + H2O = ADP-D-ribose + nicotinamide + H(+)</text>
        <dbReference type="Rhea" id="RHEA:68792"/>
        <dbReference type="ChEBI" id="CHEBI:15377"/>
        <dbReference type="ChEBI" id="CHEBI:15378"/>
        <dbReference type="ChEBI" id="CHEBI:17154"/>
        <dbReference type="ChEBI" id="CHEBI:57967"/>
        <dbReference type="ChEBI" id="CHEBI:77017"/>
    </reaction>
</comment>
<comment type="cofactor">
    <cofactor evidence="1">
        <name>Mg(2+)</name>
        <dbReference type="ChEBI" id="CHEBI:18420"/>
    </cofactor>
    <text evidence="1">Binds 2 magnesium ions per subunit.</text>
</comment>
<comment type="subunit">
    <text evidence="1">Monomer.</text>
</comment>
<comment type="similarity">
    <text evidence="2">Belongs to the ADP-ribosylglycohydrolase family.</text>
</comment>
<sequence>MCGALMERYVAAMVLSAAGDALGYFNGKWEFLQNGEKIHRQLAQLGGLDAIDVERWRVSDDTVMHLATAEALLEAGKVSDLTHLYSLLAKHYQDCMGDMDGRAPGGASVQNAMLLEPDKADGWRIPFNSHEGGCGAAMRAMCIGLRFPHSSQLDSLIQVSIESGRMTHHHPTGYLGALVSALFTAYAVNGKPPQQWGRGLMEVLPEAKKYIVQSGFFVEQNLQHWSYFQDQWEKYLKLRGIWDGKSAPTFPKPFDVKERDQFYSSVSYSGWGGSSGHDAPMIAYDAILAAGDSWKELAHRAFFHGGDSDSTAAIAGCWWGVMYGFKGVSPSNYEKLEYRNRLEETARALYSLR</sequence>